<name>CLZ5_COCLU</name>
<feature type="chain" id="PRO_0000452630" description="NADP-dependent dehydrogenase clz5">
    <location>
        <begin position="1"/>
        <end position="286"/>
    </location>
</feature>
<feature type="active site" description="Proton acceptor" evidence="5">
    <location>
        <position position="207"/>
    </location>
</feature>
<feature type="active site" description="Proton donor" evidence="3">
    <location>
        <position position="207"/>
    </location>
</feature>
<feature type="active site" description="Lowers pKa of active site Tyr" evidence="3">
    <location>
        <position position="211"/>
    </location>
</feature>
<feature type="binding site" evidence="2">
    <location>
        <position position="49"/>
    </location>
    <ligand>
        <name>NADP(+)</name>
        <dbReference type="ChEBI" id="CHEBI:58349"/>
    </ligand>
</feature>
<feature type="binding site" evidence="2">
    <location>
        <position position="51"/>
    </location>
    <ligand>
        <name>NADP(+)</name>
        <dbReference type="ChEBI" id="CHEBI:58349"/>
    </ligand>
</feature>
<feature type="binding site" evidence="2">
    <location>
        <position position="93"/>
    </location>
    <ligand>
        <name>NADP(+)</name>
        <dbReference type="ChEBI" id="CHEBI:58349"/>
    </ligand>
</feature>
<feature type="binding site" evidence="3">
    <location>
        <position position="207"/>
    </location>
    <ligand>
        <name>NADP(+)</name>
        <dbReference type="ChEBI" id="CHEBI:58349"/>
    </ligand>
</feature>
<feature type="binding site" evidence="3">
    <location>
        <position position="211"/>
    </location>
    <ligand>
        <name>NADP(+)</name>
        <dbReference type="ChEBI" id="CHEBI:58349"/>
    </ligand>
</feature>
<feature type="binding site" evidence="3">
    <location>
        <position position="241"/>
    </location>
    <ligand>
        <name>NADP(+)</name>
        <dbReference type="ChEBI" id="CHEBI:58349"/>
    </ligand>
</feature>
<feature type="binding site" evidence="3">
    <location>
        <position position="245"/>
    </location>
    <ligand>
        <name>NADP(+)</name>
        <dbReference type="ChEBI" id="CHEBI:58349"/>
    </ligand>
</feature>
<dbReference type="EC" id="1.1.1.-" evidence="9"/>
<dbReference type="EMBL" id="MF806533">
    <property type="protein sequence ID" value="AXF50648.1"/>
    <property type="molecule type" value="Genomic_DNA"/>
</dbReference>
<dbReference type="SMR" id="A0A345BJN5"/>
<dbReference type="GO" id="GO:0005829">
    <property type="term" value="C:cytosol"/>
    <property type="evidence" value="ECO:0007669"/>
    <property type="project" value="UniProtKB-SubCell"/>
</dbReference>
<dbReference type="GO" id="GO:0016616">
    <property type="term" value="F:oxidoreductase activity, acting on the CH-OH group of donors, NAD or NADP as acceptor"/>
    <property type="evidence" value="ECO:0007669"/>
    <property type="project" value="TreeGrafter"/>
</dbReference>
<dbReference type="Gene3D" id="3.40.50.720">
    <property type="entry name" value="NAD(P)-binding Rossmann-like Domain"/>
    <property type="match status" value="1"/>
</dbReference>
<dbReference type="InterPro" id="IPR036291">
    <property type="entry name" value="NAD(P)-bd_dom_sf"/>
</dbReference>
<dbReference type="InterPro" id="IPR020904">
    <property type="entry name" value="Sc_DH/Rdtase_CS"/>
</dbReference>
<dbReference type="InterPro" id="IPR002347">
    <property type="entry name" value="SDR_fam"/>
</dbReference>
<dbReference type="PANTHER" id="PTHR44229">
    <property type="entry name" value="15-HYDROXYPROSTAGLANDIN DEHYDROGENASE [NAD(+)]"/>
    <property type="match status" value="1"/>
</dbReference>
<dbReference type="PANTHER" id="PTHR44229:SF4">
    <property type="entry name" value="15-HYDROXYPROSTAGLANDIN DEHYDROGENASE [NAD(+)]"/>
    <property type="match status" value="1"/>
</dbReference>
<dbReference type="Pfam" id="PF00106">
    <property type="entry name" value="adh_short"/>
    <property type="match status" value="1"/>
</dbReference>
<dbReference type="PRINTS" id="PR00081">
    <property type="entry name" value="GDHRDH"/>
</dbReference>
<dbReference type="SUPFAM" id="SSF51735">
    <property type="entry name" value="NAD(P)-binding Rossmann-fold domains"/>
    <property type="match status" value="1"/>
</dbReference>
<dbReference type="PROSITE" id="PS00061">
    <property type="entry name" value="ADH_SHORT"/>
    <property type="match status" value="1"/>
</dbReference>
<organism>
    <name type="scientific">Cochliobolus lunatus</name>
    <name type="common">Filamentous fungus</name>
    <name type="synonym">Curvularia lunata</name>
    <dbReference type="NCBI Taxonomy" id="5503"/>
    <lineage>
        <taxon>Eukaryota</taxon>
        <taxon>Fungi</taxon>
        <taxon>Dikarya</taxon>
        <taxon>Ascomycota</taxon>
        <taxon>Pezizomycotina</taxon>
        <taxon>Dothideomycetes</taxon>
        <taxon>Pleosporomycetidae</taxon>
        <taxon>Pleosporales</taxon>
        <taxon>Pleosporineae</taxon>
        <taxon>Pleosporaceae</taxon>
        <taxon>Curvularia</taxon>
    </lineage>
</organism>
<protein>
    <recommendedName>
        <fullName evidence="7">NADP-dependent dehydrogenase clz5</fullName>
        <ecNumber evidence="9">1.1.1.-</ecNumber>
    </recommendedName>
    <alternativeName>
        <fullName evidence="7">Squalestatin S1 biosynthesis cluster protein clz5</fullName>
    </alternativeName>
    <alternativeName>
        <fullName evidence="7">Zaragozic acid A biosynthesis cluster protein 5</fullName>
    </alternativeName>
</protein>
<reference key="1">
    <citation type="journal article" date="2017" name="Org. Lett.">
        <title>Identification and heterologous production of a benzoyl-primed tricarboxylic acid polyketide intermediate from the zaragozic acid A biosynthetic pathway.</title>
        <authorList>
            <person name="Liu N."/>
            <person name="Hung Y.S."/>
            <person name="Gao S.S."/>
            <person name="Hang L."/>
            <person name="Zou Y."/>
            <person name="Chooi Y.H."/>
            <person name="Tang Y."/>
        </authorList>
    </citation>
    <scope>NUCLEOTIDE SEQUENCE [GENOMIC DNA]</scope>
    <scope>FUNCTION</scope>
    <scope>PATHWAY</scope>
    <source>
        <strain>ATCC 74067</strain>
    </source>
</reference>
<sequence length="286" mass="30770">MAAPNDPELTRRRQRQEDFLRGTSKINFDDHVDHHVLSGKTAIITGGASGLGLGIAKALSDNGCRVAVLDLSECAEAGTDESNIESPKLFKCDVSSWESLLAAFQEVMLWSADRLDIVVLSAGVRSHNIKDLILKRAVGSASTPVKPPSSVFDVNLLGTYYSAYLALWYFTNLESKSDGLESSSWRPQLLFIGSLASYIEQPLSADYCASKHGVRGLWKSVRSHSASFGGCQTNLLAPTFIDNRQGSTKSRGDGALISLTTDVKLGEVADVVAGALRCICDNNIEG</sequence>
<evidence type="ECO:0000250" key="1">
    <source>
        <dbReference type="UniProtKB" id="A0A3G1DJE9"/>
    </source>
</evidence>
<evidence type="ECO:0000250" key="2">
    <source>
        <dbReference type="UniProtKB" id="L0E2Z4"/>
    </source>
</evidence>
<evidence type="ECO:0000250" key="3">
    <source>
        <dbReference type="UniProtKB" id="O93868"/>
    </source>
</evidence>
<evidence type="ECO:0000250" key="4">
    <source>
        <dbReference type="UniProtKB" id="P87017"/>
    </source>
</evidence>
<evidence type="ECO:0000255" key="5">
    <source>
        <dbReference type="PROSITE-ProRule" id="PRU10001"/>
    </source>
</evidence>
<evidence type="ECO:0000269" key="6">
    <source>
    </source>
</evidence>
<evidence type="ECO:0000303" key="7">
    <source>
    </source>
</evidence>
<evidence type="ECO:0000305" key="8"/>
<evidence type="ECO:0000305" key="9">
    <source>
    </source>
</evidence>
<accession>A0A345BJN5</accession>
<comment type="function">
    <text evidence="1 6 9">NADP-dependent dehydrogenase; part of the gene cluster that mediates the biosynthesis of squalestatin S1 (SQS1, also known as zaragozic acid A), a heavily oxidized fungal polyketide that offers potent cholesterol lowering activity by targeting squalene synthase (SS) (PubMed:28605916). SQS1 is composed of a 2,8-dioxobicyclic[3.2.1]octane-3,4,5-tricarboxyclic acid core that is connected to two lipophilic polyketide arms (PubMed:28605916). These initial steps feature the priming of an unusual benzoic acid starter unit onto the highly reducing polyketide synthase clz14, followed by oxaloacetate extension and product release to generate a tricarboxylic acid containing product (PubMed:28605916). The phenylalanine ammonia lyase (PAL) clz10 and the acyl-CoA ligase clz12 are involved in transforming phenylalanine into benzoyl-CoA (PubMed:28605916). The citrate synthase-like protein clz17 is involved in connecting the C-alpha-carbons of the hexaketide chain and oxaloacetate to afford the tricarboxylic acid unit (PubMed:28605916). The potential hydrolytic enzymes, clz11 and clz13, are in close proximity to pks2 and may participate in product release (PubMed:28605916). On the other side, the tetraketide arm is synthesized by a the squalestatin tetraketide synthase clz2 and enzymatically esterified to the core in the last biosynthetic step, by the acetyltransferase clz6 (By similarity). The biosynthesis of the tetraketide must involve 3 rounds of chain extension (By similarity). After the first and second rounds methyl-transfer occurs, and in all rounds of extension the ketoreductase and dehydratase are active (By similarity). The enoyl reductase and C-MeT of clz2 are not active in the final round of extension (By similarity). The acetyltransferase clz6 appears to have a broad substrate selectivity for its acyl CoA substrate, allowing the in vitro synthesis of novel squalestatins (By similarity). The biosynthesis of SQS1 requires several oxidative steps likely performed by oxidoreductases clz3, clz15 and clz16 (Probable). Finally, in support of the identification of the cluster as being responsible for SQS1 production, the cluster contains a gene encoding a putative squalene synthase (SS) clz20, suggesting a likely mechanism for self-resistance (Probable).</text>
</comment>
<comment type="pathway">
    <text evidence="9">Secondary metabolite biosynthesis.</text>
</comment>
<comment type="subunit">
    <text evidence="4">Homodimer.</text>
</comment>
<comment type="subcellular location">
    <subcellularLocation>
        <location evidence="4">Cytoplasm</location>
        <location evidence="4">Cytosol</location>
    </subcellularLocation>
</comment>
<comment type="similarity">
    <text evidence="8">Belongs to the short-chain dehydrogenases/reductases (SDR) family.</text>
</comment>
<proteinExistence type="inferred from homology"/>
<keyword id="KW-0963">Cytoplasm</keyword>
<keyword id="KW-0521">NADP</keyword>
<keyword id="KW-0560">Oxidoreductase</keyword>
<gene>
    <name evidence="7" type="primary">clz5</name>
</gene>